<keyword id="KW-0547">Nucleotide-binding</keyword>
<reference key="1">
    <citation type="journal article" date="2005" name="J. Bacteriol.">
        <title>Genomic sequence of an otitis media isolate of nontypeable Haemophilus influenzae: comparative study with H. influenzae serotype d, strain KW20.</title>
        <authorList>
            <person name="Harrison A."/>
            <person name="Dyer D.W."/>
            <person name="Gillaspy A."/>
            <person name="Ray W.C."/>
            <person name="Mungur R."/>
            <person name="Carson M.B."/>
            <person name="Zhong H."/>
            <person name="Gipson J."/>
            <person name="Gipson M."/>
            <person name="Johnson L.S."/>
            <person name="Lewis L."/>
            <person name="Bakaletz L.O."/>
            <person name="Munson R.S. Jr."/>
        </authorList>
    </citation>
    <scope>NUCLEOTIDE SEQUENCE [LARGE SCALE GENOMIC DNA]</scope>
    <source>
        <strain>86-028NP</strain>
    </source>
</reference>
<name>Y1194_HAEI8</name>
<organism>
    <name type="scientific">Haemophilus influenzae (strain 86-028NP)</name>
    <dbReference type="NCBI Taxonomy" id="281310"/>
    <lineage>
        <taxon>Bacteria</taxon>
        <taxon>Pseudomonadati</taxon>
        <taxon>Pseudomonadota</taxon>
        <taxon>Gammaproteobacteria</taxon>
        <taxon>Pasteurellales</taxon>
        <taxon>Pasteurellaceae</taxon>
        <taxon>Haemophilus</taxon>
    </lineage>
</organism>
<dbReference type="EMBL" id="CP000057">
    <property type="protein sequence ID" value="AAX88050.1"/>
    <property type="molecule type" value="Genomic_DNA"/>
</dbReference>
<dbReference type="RefSeq" id="WP_005651674.1">
    <property type="nucleotide sequence ID" value="NC_007146.2"/>
</dbReference>
<dbReference type="SMR" id="Q4QLP7"/>
<dbReference type="GeneID" id="93220049"/>
<dbReference type="KEGG" id="hit:NTHI1194"/>
<dbReference type="HOGENOM" id="CLU_099839_1_0_6"/>
<dbReference type="Proteomes" id="UP000002525">
    <property type="component" value="Chromosome"/>
</dbReference>
<dbReference type="GO" id="GO:0005829">
    <property type="term" value="C:cytosol"/>
    <property type="evidence" value="ECO:0007669"/>
    <property type="project" value="TreeGrafter"/>
</dbReference>
<dbReference type="GO" id="GO:0000166">
    <property type="term" value="F:nucleotide binding"/>
    <property type="evidence" value="ECO:0007669"/>
    <property type="project" value="TreeGrafter"/>
</dbReference>
<dbReference type="CDD" id="cd11740">
    <property type="entry name" value="YajQ_like"/>
    <property type="match status" value="1"/>
</dbReference>
<dbReference type="FunFam" id="3.30.70.860:FF:000001">
    <property type="entry name" value="UPF0234 protein YajQ"/>
    <property type="match status" value="1"/>
</dbReference>
<dbReference type="FunFam" id="3.30.70.990:FF:000001">
    <property type="entry name" value="UPF0234 protein YajQ"/>
    <property type="match status" value="1"/>
</dbReference>
<dbReference type="Gene3D" id="3.30.70.860">
    <property type="match status" value="1"/>
</dbReference>
<dbReference type="Gene3D" id="3.30.70.990">
    <property type="entry name" value="YajQ-like, domain 2"/>
    <property type="match status" value="1"/>
</dbReference>
<dbReference type="HAMAP" id="MF_00632">
    <property type="entry name" value="YajQ"/>
    <property type="match status" value="1"/>
</dbReference>
<dbReference type="InterPro" id="IPR007551">
    <property type="entry name" value="DUF520"/>
</dbReference>
<dbReference type="InterPro" id="IPR035571">
    <property type="entry name" value="UPF0234-like_C"/>
</dbReference>
<dbReference type="InterPro" id="IPR035570">
    <property type="entry name" value="UPF0234_N"/>
</dbReference>
<dbReference type="InterPro" id="IPR036183">
    <property type="entry name" value="YajQ-like_sf"/>
</dbReference>
<dbReference type="NCBIfam" id="NF003819">
    <property type="entry name" value="PRK05412.1"/>
    <property type="match status" value="1"/>
</dbReference>
<dbReference type="PANTHER" id="PTHR30476">
    <property type="entry name" value="UPF0234 PROTEIN YAJQ"/>
    <property type="match status" value="1"/>
</dbReference>
<dbReference type="PANTHER" id="PTHR30476:SF0">
    <property type="entry name" value="UPF0234 PROTEIN YAJQ"/>
    <property type="match status" value="1"/>
</dbReference>
<dbReference type="Pfam" id="PF04461">
    <property type="entry name" value="DUF520"/>
    <property type="match status" value="1"/>
</dbReference>
<dbReference type="SUPFAM" id="SSF89963">
    <property type="entry name" value="YajQ-like"/>
    <property type="match status" value="2"/>
</dbReference>
<evidence type="ECO:0000255" key="1">
    <source>
        <dbReference type="HAMAP-Rule" id="MF_00632"/>
    </source>
</evidence>
<gene>
    <name type="ordered locus">NTHI1194</name>
</gene>
<sequence>MPSFDIVSEITLHEVRNAVENANRVLSTRYDFRGVEAVIELNEKNETIKITTESDFQLEQLIEILIGSCIKRGIEHSSLDIPAESEHHGKLYSKEIKLKQGIETEMAKKITKLVKDSKIKVQTQIQGEQVRVTGKSRDDLQAVIQLVKSAELGQPFQFNNFRD</sequence>
<comment type="function">
    <text evidence="1">Nucleotide-binding protein.</text>
</comment>
<comment type="similarity">
    <text evidence="1">Belongs to the YajQ family.</text>
</comment>
<proteinExistence type="inferred from homology"/>
<feature type="chain" id="PRO_0000261941" description="Nucleotide-binding protein NTHI1194">
    <location>
        <begin position="1"/>
        <end position="163"/>
    </location>
</feature>
<protein>
    <recommendedName>
        <fullName evidence="1">Nucleotide-binding protein NTHI1194</fullName>
    </recommendedName>
</protein>
<accession>Q4QLP7</accession>